<protein>
    <recommendedName>
        <fullName>Meiotic recombination protein REC104</fullName>
    </recommendedName>
</protein>
<evidence type="ECO:0000269" key="1">
    <source>
    </source>
</evidence>
<evidence type="ECO:0007829" key="2">
    <source>
        <dbReference type="PDB" id="8URQ"/>
    </source>
</evidence>
<organism>
    <name type="scientific">Saccharomyces cerevisiae (strain ATCC 204508 / S288c)</name>
    <name type="common">Baker's yeast</name>
    <dbReference type="NCBI Taxonomy" id="559292"/>
    <lineage>
        <taxon>Eukaryota</taxon>
        <taxon>Fungi</taxon>
        <taxon>Dikarya</taxon>
        <taxon>Ascomycota</taxon>
        <taxon>Saccharomycotina</taxon>
        <taxon>Saccharomycetes</taxon>
        <taxon>Saccharomycetales</taxon>
        <taxon>Saccharomycetaceae</taxon>
        <taxon>Saccharomyces</taxon>
    </lineage>
</organism>
<proteinExistence type="evidence at protein level"/>
<accession>P33323</accession>
<accession>D3DLA6</accession>
<comment type="function">
    <text>Potential transcriptional regulator that is required to activate expression of a number of early meiotic genes including HOP1.</text>
</comment>
<comment type="subunit">
    <text evidence="1">Interacts with REC114 and SPO11.</text>
</comment>
<comment type="interaction">
    <interactant intactId="EBI-16412992">
        <id>P33323</id>
    </interactant>
    <interactant intactId="EBI-2566907">
        <id>P29467</id>
        <label>MEI4</label>
    </interactant>
    <organismsDiffer>false</organismsDiffer>
    <experiments>5</experiments>
</comment>
<comment type="interaction">
    <interactant intactId="EBI-16412992">
        <id>P33323</id>
    </interactant>
    <interactant intactId="EBI-14432">
        <id>Q02721</id>
        <label>REC102</label>
    </interactant>
    <organismsDiffer>false</organismsDiffer>
    <experiments>6</experiments>
</comment>
<comment type="interaction">
    <interactant intactId="EBI-16412992">
        <id>P33323</id>
    </interactant>
    <interactant intactId="EBI-17705">
        <id>P23179</id>
        <label>SPO11</label>
    </interactant>
    <organismsDiffer>false</organismsDiffer>
    <experiments>7</experiments>
</comment>
<comment type="developmental stage">
    <text>Meiosis-specific.</text>
</comment>
<keyword id="KW-0002">3D-structure</keyword>
<keyword id="KW-0010">Activator</keyword>
<keyword id="KW-0469">Meiosis</keyword>
<keyword id="KW-1185">Reference proteome</keyword>
<keyword id="KW-0804">Transcription</keyword>
<keyword id="KW-0805">Transcription regulation</keyword>
<sequence>MSIEEEDTNKITCTQDFLHQYFVTERVSIQFGLNNKTVKRINKDEFDKAVNCIMSWTNYPKPGLKRTASTYLLSNSFKKSATVSLPFILGDPVCMPKRVESNNNDTCLLYSDTLYDDPLIQRNDQAGDEIEDEFSFTLLRSEVNEIRPISSSSTAQILQSDYSALMYERQASNGSIFQFSSP</sequence>
<dbReference type="EMBL" id="S58278">
    <property type="protein sequence ID" value="AAB26085.1"/>
    <property type="molecule type" value="Genomic_DNA"/>
</dbReference>
<dbReference type="EMBL" id="U10397">
    <property type="protein sequence ID" value="AAB68976.1"/>
    <property type="molecule type" value="Genomic_DNA"/>
</dbReference>
<dbReference type="EMBL" id="AY558285">
    <property type="protein sequence ID" value="AAS56611.1"/>
    <property type="molecule type" value="Genomic_DNA"/>
</dbReference>
<dbReference type="EMBL" id="BK006934">
    <property type="protein sequence ID" value="DAA06850.1"/>
    <property type="molecule type" value="Genomic_DNA"/>
</dbReference>
<dbReference type="PIR" id="S46667">
    <property type="entry name" value="S46667"/>
</dbReference>
<dbReference type="RefSeq" id="NP_012027.1">
    <property type="nucleotide sequence ID" value="NM_001179288.1"/>
</dbReference>
<dbReference type="PDB" id="8URQ">
    <property type="method" value="EM"/>
    <property type="resolution" value="3.30 A"/>
    <property type="chains" value="F=1-182"/>
</dbReference>
<dbReference type="PDB" id="8URU">
    <property type="method" value="EM"/>
    <property type="resolution" value="3.70 A"/>
    <property type="chains" value="F=1-182"/>
</dbReference>
<dbReference type="PDBsum" id="8URQ"/>
<dbReference type="PDBsum" id="8URU"/>
<dbReference type="EMDB" id="EMD-42497"/>
<dbReference type="EMDB" id="EMD-42501"/>
<dbReference type="SMR" id="P33323"/>
<dbReference type="BioGRID" id="36591">
    <property type="interactions" value="93"/>
</dbReference>
<dbReference type="ComplexPortal" id="CPX-1292">
    <property type="entry name" value="REC102-REC104 meiotic recombination initiation complex"/>
</dbReference>
<dbReference type="DIP" id="DIP-7960N"/>
<dbReference type="FunCoup" id="P33323">
    <property type="interactions" value="47"/>
</dbReference>
<dbReference type="IntAct" id="P33323">
    <property type="interactions" value="8"/>
</dbReference>
<dbReference type="STRING" id="4932.YHR157W"/>
<dbReference type="iPTMnet" id="P33323"/>
<dbReference type="PaxDb" id="4932-YHR157W"/>
<dbReference type="EnsemblFungi" id="YHR157W_mRNA">
    <property type="protein sequence ID" value="YHR157W"/>
    <property type="gene ID" value="YHR157W"/>
</dbReference>
<dbReference type="GeneID" id="856562"/>
<dbReference type="KEGG" id="sce:YHR157W"/>
<dbReference type="AGR" id="SGD:S000001200"/>
<dbReference type="SGD" id="S000001200">
    <property type="gene designation" value="REC104"/>
</dbReference>
<dbReference type="VEuPathDB" id="FungiDB:YHR157W"/>
<dbReference type="HOGENOM" id="CLU_127241_0_0_1"/>
<dbReference type="InParanoid" id="P33323"/>
<dbReference type="OMA" id="GDPVCMP"/>
<dbReference type="OrthoDB" id="4045971at2759"/>
<dbReference type="BioCyc" id="YEAST:G3O-31192-MONOMER"/>
<dbReference type="BioGRID-ORCS" id="856562">
    <property type="hits" value="1 hit in 10 CRISPR screens"/>
</dbReference>
<dbReference type="PRO" id="PR:P33323"/>
<dbReference type="Proteomes" id="UP000002311">
    <property type="component" value="Chromosome VIII"/>
</dbReference>
<dbReference type="RNAct" id="P33323">
    <property type="molecule type" value="protein"/>
</dbReference>
<dbReference type="GO" id="GO:0000794">
    <property type="term" value="C:condensed nuclear chromosome"/>
    <property type="evidence" value="ECO:0000314"/>
    <property type="project" value="ComplexPortal"/>
</dbReference>
<dbReference type="GO" id="GO:0042138">
    <property type="term" value="P:meiotic DNA double-strand break formation"/>
    <property type="evidence" value="ECO:0000314"/>
    <property type="project" value="ComplexPortal"/>
</dbReference>
<dbReference type="GO" id="GO:0007131">
    <property type="term" value="P:reciprocal meiotic recombination"/>
    <property type="evidence" value="ECO:0000315"/>
    <property type="project" value="SGD"/>
</dbReference>
<dbReference type="InterPro" id="IPR035349">
    <property type="entry name" value="Rec104"/>
</dbReference>
<dbReference type="Pfam" id="PF17378">
    <property type="entry name" value="REC104"/>
    <property type="match status" value="1"/>
</dbReference>
<gene>
    <name type="primary">REC104</name>
    <name type="ordered locus">YHR157W</name>
</gene>
<name>RE104_YEAST</name>
<feature type="chain" id="PRO_0000097216" description="Meiotic recombination protein REC104">
    <location>
        <begin position="1"/>
        <end position="182"/>
    </location>
</feature>
<feature type="helix" evidence="2">
    <location>
        <begin position="14"/>
        <end position="20"/>
    </location>
</feature>
<feature type="helix" evidence="2">
    <location>
        <begin position="26"/>
        <end position="28"/>
    </location>
</feature>
<feature type="turn" evidence="2">
    <location>
        <begin position="29"/>
        <end position="31"/>
    </location>
</feature>
<feature type="helix" evidence="2">
    <location>
        <begin position="43"/>
        <end position="57"/>
    </location>
</feature>
<reference key="1">
    <citation type="journal article" date="1993" name="Genetics">
        <title>A conditional allele of the Saccharomyces cerevisiae HOP1 gene is suppressed by overexpression of two other meiosis-specific genes: RED1 and REC104.</title>
        <authorList>
            <person name="Hollingsworth N.M."/>
            <person name="Johnson A.D."/>
        </authorList>
    </citation>
    <scope>NUCLEOTIDE SEQUENCE [GENOMIC DNA]</scope>
</reference>
<reference key="2">
    <citation type="journal article" date="1992" name="Dev. Genet.">
        <title>Characterization of REC104, a gene required for early meiotic recombination in the yeast Saccharomyces cerevisiae.</title>
        <authorList>
            <person name="Galbraith A.M."/>
            <person name="Malone R.E."/>
        </authorList>
    </citation>
    <scope>NUCLEOTIDE SEQUENCE [GENOMIC DNA]</scope>
</reference>
<reference key="3">
    <citation type="journal article" date="1994" name="Science">
        <title>Complete nucleotide sequence of Saccharomyces cerevisiae chromosome VIII.</title>
        <authorList>
            <person name="Johnston M."/>
            <person name="Andrews S."/>
            <person name="Brinkman R."/>
            <person name="Cooper J."/>
            <person name="Ding H."/>
            <person name="Dover J."/>
            <person name="Du Z."/>
            <person name="Favello A."/>
            <person name="Fulton L."/>
            <person name="Gattung S."/>
            <person name="Geisel C."/>
            <person name="Kirsten J."/>
            <person name="Kucaba T."/>
            <person name="Hillier L.W."/>
            <person name="Jier M."/>
            <person name="Johnston L."/>
            <person name="Langston Y."/>
            <person name="Latreille P."/>
            <person name="Louis E.J."/>
            <person name="Macri C."/>
            <person name="Mardis E."/>
            <person name="Menezes S."/>
            <person name="Mouser L."/>
            <person name="Nhan M."/>
            <person name="Rifkin L."/>
            <person name="Riles L."/>
            <person name="St Peter H."/>
            <person name="Trevaskis E."/>
            <person name="Vaughan K."/>
            <person name="Vignati D."/>
            <person name="Wilcox L."/>
            <person name="Wohldman P."/>
            <person name="Waterston R."/>
            <person name="Wilson R."/>
            <person name="Vaudin M."/>
        </authorList>
    </citation>
    <scope>NUCLEOTIDE SEQUENCE [LARGE SCALE GENOMIC DNA]</scope>
    <source>
        <strain>ATCC 204508 / S288c</strain>
    </source>
</reference>
<reference key="4">
    <citation type="journal article" date="2014" name="G3 (Bethesda)">
        <title>The reference genome sequence of Saccharomyces cerevisiae: Then and now.</title>
        <authorList>
            <person name="Engel S.R."/>
            <person name="Dietrich F.S."/>
            <person name="Fisk D.G."/>
            <person name="Binkley G."/>
            <person name="Balakrishnan R."/>
            <person name="Costanzo M.C."/>
            <person name="Dwight S.S."/>
            <person name="Hitz B.C."/>
            <person name="Karra K."/>
            <person name="Nash R.S."/>
            <person name="Weng S."/>
            <person name="Wong E.D."/>
            <person name="Lloyd P."/>
            <person name="Skrzypek M.S."/>
            <person name="Miyasato S.R."/>
            <person name="Simison M."/>
            <person name="Cherry J.M."/>
        </authorList>
    </citation>
    <scope>GENOME REANNOTATION</scope>
    <source>
        <strain>ATCC 204508 / S288c</strain>
    </source>
</reference>
<reference key="5">
    <citation type="journal article" date="2007" name="Genome Res.">
        <title>Approaching a complete repository of sequence-verified protein-encoding clones for Saccharomyces cerevisiae.</title>
        <authorList>
            <person name="Hu Y."/>
            <person name="Rolfs A."/>
            <person name="Bhullar B."/>
            <person name="Murthy T.V.S."/>
            <person name="Zhu C."/>
            <person name="Berger M.F."/>
            <person name="Camargo A.A."/>
            <person name="Kelley F."/>
            <person name="McCarron S."/>
            <person name="Jepson D."/>
            <person name="Richardson A."/>
            <person name="Raphael J."/>
            <person name="Moreira D."/>
            <person name="Taycher E."/>
            <person name="Zuo D."/>
            <person name="Mohr S."/>
            <person name="Kane M.F."/>
            <person name="Williamson J."/>
            <person name="Simpson A.J.G."/>
            <person name="Bulyk M.L."/>
            <person name="Harlow E."/>
            <person name="Marsischky G."/>
            <person name="Kolodner R.D."/>
            <person name="LaBaer J."/>
        </authorList>
    </citation>
    <scope>NUCLEOTIDE SEQUENCE [GENOMIC DNA]</scope>
    <source>
        <strain>ATCC 204508 / S288c</strain>
    </source>
</reference>
<reference key="6">
    <citation type="journal article" date="2004" name="Mol. Cell">
        <title>Antiviral protein Ski8 is a direct partner of Spo11 in meiotic DNA break formation, independent of its cytoplasmic role in RNA metabolism.</title>
        <authorList>
            <person name="Arora C."/>
            <person name="Kee K."/>
            <person name="Maleki S."/>
            <person name="Keeney S."/>
        </authorList>
    </citation>
    <scope>INTERACTION WITH REC114 AND SPO11</scope>
</reference>